<reference key="1">
    <citation type="journal article" date="2003" name="Nat. Genet.">
        <title>Comparative analysis of the genome sequences of Bordetella pertussis, Bordetella parapertussis and Bordetella bronchiseptica.</title>
        <authorList>
            <person name="Parkhill J."/>
            <person name="Sebaihia M."/>
            <person name="Preston A."/>
            <person name="Murphy L.D."/>
            <person name="Thomson N.R."/>
            <person name="Harris D.E."/>
            <person name="Holden M.T.G."/>
            <person name="Churcher C.M."/>
            <person name="Bentley S.D."/>
            <person name="Mungall K.L."/>
            <person name="Cerdeno-Tarraga A.-M."/>
            <person name="Temple L."/>
            <person name="James K.D."/>
            <person name="Harris B."/>
            <person name="Quail M.A."/>
            <person name="Achtman M."/>
            <person name="Atkin R."/>
            <person name="Baker S."/>
            <person name="Basham D."/>
            <person name="Bason N."/>
            <person name="Cherevach I."/>
            <person name="Chillingworth T."/>
            <person name="Collins M."/>
            <person name="Cronin A."/>
            <person name="Davis P."/>
            <person name="Doggett J."/>
            <person name="Feltwell T."/>
            <person name="Goble A."/>
            <person name="Hamlin N."/>
            <person name="Hauser H."/>
            <person name="Holroyd S."/>
            <person name="Jagels K."/>
            <person name="Leather S."/>
            <person name="Moule S."/>
            <person name="Norberczak H."/>
            <person name="O'Neil S."/>
            <person name="Ormond D."/>
            <person name="Price C."/>
            <person name="Rabbinowitsch E."/>
            <person name="Rutter S."/>
            <person name="Sanders M."/>
            <person name="Saunders D."/>
            <person name="Seeger K."/>
            <person name="Sharp S."/>
            <person name="Simmonds M."/>
            <person name="Skelton J."/>
            <person name="Squares R."/>
            <person name="Squares S."/>
            <person name="Stevens K."/>
            <person name="Unwin L."/>
            <person name="Whitehead S."/>
            <person name="Barrell B.G."/>
            <person name="Maskell D.J."/>
        </authorList>
    </citation>
    <scope>NUCLEOTIDE SEQUENCE [LARGE SCALE GENOMIC DNA]</scope>
    <source>
        <strain>ATCC BAA-588 / NCTC 13252 / RB50</strain>
    </source>
</reference>
<evidence type="ECO:0000250" key="1"/>
<evidence type="ECO:0000305" key="2"/>
<accession>P0A353</accession>
<accession>Q9Z5R4</accession>
<name>CSPA_BORBR</name>
<feature type="chain" id="PRO_0000100299" description="Cold shock-like protein CspA">
    <location>
        <begin position="1"/>
        <end position="67"/>
    </location>
</feature>
<feature type="domain" description="CSD">
    <location>
        <begin position="4"/>
        <end position="64"/>
    </location>
</feature>
<dbReference type="EMBL" id="BX640443">
    <property type="protein sequence ID" value="CAE32745.1"/>
    <property type="status" value="ALT_INIT"/>
    <property type="molecule type" value="Genomic_DNA"/>
</dbReference>
<dbReference type="RefSeq" id="WP_010930551.1">
    <property type="nucleotide sequence ID" value="NC_002927.3"/>
</dbReference>
<dbReference type="SMR" id="P0A353"/>
<dbReference type="KEGG" id="bbr:BB2249"/>
<dbReference type="eggNOG" id="COG1278">
    <property type="taxonomic scope" value="Bacteria"/>
</dbReference>
<dbReference type="HOGENOM" id="CLU_117621_0_3_4"/>
<dbReference type="Proteomes" id="UP000001027">
    <property type="component" value="Chromosome"/>
</dbReference>
<dbReference type="GO" id="GO:0005829">
    <property type="term" value="C:cytosol"/>
    <property type="evidence" value="ECO:0007669"/>
    <property type="project" value="UniProtKB-ARBA"/>
</dbReference>
<dbReference type="GO" id="GO:0003677">
    <property type="term" value="F:DNA binding"/>
    <property type="evidence" value="ECO:0007669"/>
    <property type="project" value="UniProtKB-KW"/>
</dbReference>
<dbReference type="CDD" id="cd04458">
    <property type="entry name" value="CSP_CDS"/>
    <property type="match status" value="1"/>
</dbReference>
<dbReference type="FunFam" id="2.40.50.140:FF:000006">
    <property type="entry name" value="Cold shock protein CspC"/>
    <property type="match status" value="1"/>
</dbReference>
<dbReference type="Gene3D" id="2.40.50.140">
    <property type="entry name" value="Nucleic acid-binding proteins"/>
    <property type="match status" value="1"/>
</dbReference>
<dbReference type="InterPro" id="IPR012156">
    <property type="entry name" value="Cold_shock_CspA"/>
</dbReference>
<dbReference type="InterPro" id="IPR011129">
    <property type="entry name" value="CSD"/>
</dbReference>
<dbReference type="InterPro" id="IPR019844">
    <property type="entry name" value="CSD_CS"/>
</dbReference>
<dbReference type="InterPro" id="IPR002059">
    <property type="entry name" value="CSP_DNA-bd"/>
</dbReference>
<dbReference type="InterPro" id="IPR012340">
    <property type="entry name" value="NA-bd_OB-fold"/>
</dbReference>
<dbReference type="PANTHER" id="PTHR46565">
    <property type="entry name" value="COLD SHOCK DOMAIN PROTEIN 2"/>
    <property type="match status" value="1"/>
</dbReference>
<dbReference type="PANTHER" id="PTHR46565:SF20">
    <property type="entry name" value="COLD SHOCK DOMAIN-CONTAINING PROTEIN 4"/>
    <property type="match status" value="1"/>
</dbReference>
<dbReference type="Pfam" id="PF00313">
    <property type="entry name" value="CSD"/>
    <property type="match status" value="1"/>
</dbReference>
<dbReference type="PIRSF" id="PIRSF002599">
    <property type="entry name" value="Cold_shock_A"/>
    <property type="match status" value="1"/>
</dbReference>
<dbReference type="PRINTS" id="PR00050">
    <property type="entry name" value="COLDSHOCK"/>
</dbReference>
<dbReference type="SMART" id="SM00357">
    <property type="entry name" value="CSP"/>
    <property type="match status" value="1"/>
</dbReference>
<dbReference type="SUPFAM" id="SSF50249">
    <property type="entry name" value="Nucleic acid-binding proteins"/>
    <property type="match status" value="1"/>
</dbReference>
<dbReference type="PROSITE" id="PS00352">
    <property type="entry name" value="CSD_1"/>
    <property type="match status" value="1"/>
</dbReference>
<dbReference type="PROSITE" id="PS51857">
    <property type="entry name" value="CSD_2"/>
    <property type="match status" value="1"/>
</dbReference>
<keyword id="KW-0010">Activator</keyword>
<keyword id="KW-0963">Cytoplasm</keyword>
<keyword id="KW-0238">DNA-binding</keyword>
<keyword id="KW-0804">Transcription</keyword>
<keyword id="KW-0805">Transcription regulation</keyword>
<gene>
    <name type="primary">cspA</name>
    <name type="ordered locus">BB2249</name>
</gene>
<proteinExistence type="inferred from homology"/>
<protein>
    <recommendedName>
        <fullName>Cold shock-like protein CspA</fullName>
    </recommendedName>
</protein>
<comment type="subcellular location">
    <subcellularLocation>
        <location evidence="1">Cytoplasm</location>
    </subcellularLocation>
</comment>
<comment type="sequence caution" evidence="2">
    <conflict type="erroneous initiation">
        <sequence resource="EMBL-CDS" id="CAE32745"/>
    </conflict>
</comment>
<organism>
    <name type="scientific">Bordetella bronchiseptica (strain ATCC BAA-588 / NCTC 13252 / RB50)</name>
    <name type="common">Alcaligenes bronchisepticus</name>
    <dbReference type="NCBI Taxonomy" id="257310"/>
    <lineage>
        <taxon>Bacteria</taxon>
        <taxon>Pseudomonadati</taxon>
        <taxon>Pseudomonadota</taxon>
        <taxon>Betaproteobacteria</taxon>
        <taxon>Burkholderiales</taxon>
        <taxon>Alcaligenaceae</taxon>
        <taxon>Bordetella</taxon>
    </lineage>
</organism>
<sequence length="67" mass="7348">METGVVKWFNAEKGYGFITPEAGGKDLFAHFSEIQANGFKSLEENQRVSFVTAMGPKGPQATKIQIL</sequence>